<name>DPCKG_PICTO</name>
<organism>
    <name type="scientific">Picrophilus torridus (strain ATCC 700027 / DSM 9790 / JCM 10055 / NBRC 100828 / KAW 2/3)</name>
    <dbReference type="NCBI Taxonomy" id="1122961"/>
    <lineage>
        <taxon>Archaea</taxon>
        <taxon>Methanobacteriati</taxon>
        <taxon>Thermoplasmatota</taxon>
        <taxon>Thermoplasmata</taxon>
        <taxon>Thermoplasmatales</taxon>
        <taxon>Picrophilaceae</taxon>
        <taxon>Picrophilus</taxon>
    </lineage>
</organism>
<reference key="1">
    <citation type="journal article" date="2004" name="Proc. Natl. Acad. Sci. U.S.A.">
        <title>Genome sequence of Picrophilus torridus and its implications for life around pH 0.</title>
        <authorList>
            <person name="Fuetterer O."/>
            <person name="Angelov A."/>
            <person name="Liesegang H."/>
            <person name="Gottschalk G."/>
            <person name="Schleper C."/>
            <person name="Schepers B."/>
            <person name="Dock C."/>
            <person name="Antranikian G."/>
            <person name="Liebl W."/>
        </authorList>
    </citation>
    <scope>NUCLEOTIDE SEQUENCE [LARGE SCALE GENOMIC DNA]</scope>
    <source>
        <strain>ATCC 700027 / DSM 9790 / JCM 10055 / NBRC 100828 / KAW 2/3</strain>
    </source>
</reference>
<gene>
    <name type="ordered locus">PTO0868</name>
</gene>
<feature type="chain" id="PRO_0000137612" description="GTP-dependent dephospho-CoA kinase">
    <location>
        <begin position="1"/>
        <end position="165"/>
    </location>
</feature>
<feature type="binding site" evidence="1">
    <location>
        <position position="44"/>
    </location>
    <ligand>
        <name>GTP</name>
        <dbReference type="ChEBI" id="CHEBI:37565"/>
    </ligand>
</feature>
<feature type="binding site" evidence="1">
    <location>
        <position position="45"/>
    </location>
    <ligand>
        <name>GTP</name>
        <dbReference type="ChEBI" id="CHEBI:37565"/>
    </ligand>
</feature>
<feature type="binding site" evidence="1">
    <location>
        <position position="63"/>
    </location>
    <ligand>
        <name>GTP</name>
        <dbReference type="ChEBI" id="CHEBI:37565"/>
    </ligand>
</feature>
<feature type="binding site" evidence="1">
    <location>
        <position position="65"/>
    </location>
    <ligand>
        <name>GTP</name>
        <dbReference type="ChEBI" id="CHEBI:37565"/>
    </ligand>
</feature>
<feature type="binding site" evidence="1">
    <location>
        <position position="115"/>
    </location>
    <ligand>
        <name>GTP</name>
        <dbReference type="ChEBI" id="CHEBI:37565"/>
    </ligand>
</feature>
<feature type="binding site" evidence="1">
    <location>
        <position position="138"/>
    </location>
    <ligand>
        <name>GTP</name>
        <dbReference type="ChEBI" id="CHEBI:37565"/>
    </ligand>
</feature>
<protein>
    <recommendedName>
        <fullName evidence="1">GTP-dependent dephospho-CoA kinase</fullName>
        <ecNumber evidence="1">2.7.1.237</ecNumber>
    </recommendedName>
    <alternativeName>
        <fullName evidence="1">Dephospho-coenzyme A kinase</fullName>
        <shortName evidence="1">DPCK</shortName>
    </alternativeName>
</protein>
<evidence type="ECO:0000255" key="1">
    <source>
        <dbReference type="HAMAP-Rule" id="MF_00590"/>
    </source>
</evidence>
<accession>Q6L0P9</accession>
<dbReference type="EC" id="2.7.1.237" evidence="1"/>
<dbReference type="EMBL" id="AE017261">
    <property type="protein sequence ID" value="AAT43453.1"/>
    <property type="molecule type" value="Genomic_DNA"/>
</dbReference>
<dbReference type="RefSeq" id="WP_011177669.1">
    <property type="nucleotide sequence ID" value="NC_005877.1"/>
</dbReference>
<dbReference type="SMR" id="Q6L0P9"/>
<dbReference type="FunCoup" id="Q6L0P9">
    <property type="interactions" value="4"/>
</dbReference>
<dbReference type="STRING" id="263820.PTO0868"/>
<dbReference type="PaxDb" id="263820-PTO0868"/>
<dbReference type="GeneID" id="2844843"/>
<dbReference type="KEGG" id="pto:PTO0868"/>
<dbReference type="eggNOG" id="arCOG04076">
    <property type="taxonomic scope" value="Archaea"/>
</dbReference>
<dbReference type="HOGENOM" id="CLU_120795_1_0_2"/>
<dbReference type="InParanoid" id="Q6L0P9"/>
<dbReference type="OrthoDB" id="15447at2157"/>
<dbReference type="UniPathway" id="UPA00241"/>
<dbReference type="Proteomes" id="UP000000438">
    <property type="component" value="Chromosome"/>
</dbReference>
<dbReference type="GO" id="GO:0005525">
    <property type="term" value="F:GTP binding"/>
    <property type="evidence" value="ECO:0007669"/>
    <property type="project" value="UniProtKB-UniRule"/>
</dbReference>
<dbReference type="GO" id="GO:0016301">
    <property type="term" value="F:kinase activity"/>
    <property type="evidence" value="ECO:0007669"/>
    <property type="project" value="UniProtKB-UniRule"/>
</dbReference>
<dbReference type="GO" id="GO:0015937">
    <property type="term" value="P:coenzyme A biosynthetic process"/>
    <property type="evidence" value="ECO:0007669"/>
    <property type="project" value="UniProtKB-UniRule"/>
</dbReference>
<dbReference type="HAMAP" id="MF_00590">
    <property type="entry name" value="Dephospho_CoA_kinase_GTP_dep"/>
    <property type="match status" value="1"/>
</dbReference>
<dbReference type="InterPro" id="IPR007164">
    <property type="entry name" value="GTP-dep_dephospho-CoA_kin"/>
</dbReference>
<dbReference type="NCBIfam" id="NF002247">
    <property type="entry name" value="PRK01160.1-2"/>
    <property type="match status" value="1"/>
</dbReference>
<dbReference type="PANTHER" id="PTHR40732:SF1">
    <property type="entry name" value="GTP-DEPENDENT DEPHOSPHO-COA KINASE"/>
    <property type="match status" value="1"/>
</dbReference>
<dbReference type="PANTHER" id="PTHR40732">
    <property type="entry name" value="UPF0218 PROTEIN TK1697"/>
    <property type="match status" value="1"/>
</dbReference>
<dbReference type="Pfam" id="PF04019">
    <property type="entry name" value="DUF359"/>
    <property type="match status" value="1"/>
</dbReference>
<dbReference type="PIRSF" id="PIRSF006533">
    <property type="entry name" value="UCP006533"/>
    <property type="match status" value="1"/>
</dbReference>
<keyword id="KW-0173">Coenzyme A biosynthesis</keyword>
<keyword id="KW-0342">GTP-binding</keyword>
<keyword id="KW-0418">Kinase</keyword>
<keyword id="KW-0547">Nucleotide-binding</keyword>
<keyword id="KW-0808">Transferase</keyword>
<proteinExistence type="inferred from homology"/>
<comment type="function">
    <text evidence="1">Catalyzes the GTP-dependent phosphorylation of the 3'-hydroxyl group of dephosphocoenzyme A to form coenzyme A (CoA).</text>
</comment>
<comment type="catalytic activity">
    <reaction evidence="1">
        <text>3'-dephospho-CoA + GTP = GDP + CoA + H(+)</text>
        <dbReference type="Rhea" id="RHEA:61156"/>
        <dbReference type="ChEBI" id="CHEBI:15378"/>
        <dbReference type="ChEBI" id="CHEBI:37565"/>
        <dbReference type="ChEBI" id="CHEBI:57287"/>
        <dbReference type="ChEBI" id="CHEBI:57328"/>
        <dbReference type="ChEBI" id="CHEBI:58189"/>
        <dbReference type="EC" id="2.7.1.237"/>
    </reaction>
</comment>
<comment type="pathway">
    <text evidence="1">Cofactor biosynthesis; coenzyme A biosynthesis.</text>
</comment>
<comment type="similarity">
    <text evidence="1">Belongs to the GTP-dependent DPCK family.</text>
</comment>
<sequence length="165" mass="18546">MQLKFDHDLVLNQESINRIKEFSHSICSIDDIKKHGGRIITVGDVTTENLERAGLDIFIEVVDLKTKRGEKTYNHRENSISIENRPGTISLSLIRAIESSIKSNKKTRIEINGEEDLAVIPIIFYGDINTLVVYGVPDTGMACIFINTEIKSMVTDILRDLNGKT</sequence>